<feature type="signal peptide" evidence="1">
    <location>
        <begin position="1"/>
        <end position="20"/>
    </location>
</feature>
<feature type="chain" id="PRO_0000008638" description="Thyroglobulin">
    <location>
        <begin position="21"/>
        <end position="2768"/>
    </location>
</feature>
<feature type="domain" description="Thyroglobulin type-1 1" evidence="5">
    <location>
        <begin position="32"/>
        <end position="93"/>
    </location>
</feature>
<feature type="domain" description="Thyroglobulin type-1 2" evidence="5">
    <location>
        <begin position="94"/>
        <end position="161"/>
    </location>
</feature>
<feature type="domain" description="Thyroglobulin type-1 3" evidence="5">
    <location>
        <begin position="162"/>
        <end position="298"/>
    </location>
</feature>
<feature type="domain" description="Thyroglobulin type-1 4" evidence="5">
    <location>
        <begin position="299"/>
        <end position="359"/>
    </location>
</feature>
<feature type="domain" description="Thyroglobulin type-1 5" evidence="5">
    <location>
        <begin position="605"/>
        <end position="658"/>
    </location>
</feature>
<feature type="domain" description="Thyroglobulin type-1 6" evidence="5">
    <location>
        <begin position="659"/>
        <end position="726"/>
    </location>
</feature>
<feature type="domain" description="Thyroglobulin type-1 7" evidence="5">
    <location>
        <begin position="727"/>
        <end position="922"/>
    </location>
</feature>
<feature type="domain" description="Thyroglobulin type-1 8" evidence="5">
    <location>
        <begin position="923"/>
        <end position="1074"/>
    </location>
</feature>
<feature type="domain" description="Thyroglobulin type-1 9" evidence="5">
    <location>
        <begin position="1075"/>
        <end position="1146"/>
    </location>
</feature>
<feature type="domain" description="Thyroglobulin type-1 10" evidence="5">
    <location>
        <begin position="1147"/>
        <end position="1211"/>
    </location>
</feature>
<feature type="repeat" description="Type II" evidence="3">
    <location>
        <begin position="1455"/>
        <end position="1468"/>
    </location>
</feature>
<feature type="repeat" description="Type II" evidence="3">
    <location>
        <begin position="1469"/>
        <end position="1485"/>
    </location>
</feature>
<feature type="repeat" description="Type II" evidence="3">
    <location>
        <begin position="1486"/>
        <end position="1502"/>
    </location>
</feature>
<feature type="domain" description="Thyroglobulin type-1 11" evidence="5">
    <location>
        <begin position="1510"/>
        <end position="1564"/>
    </location>
</feature>
<feature type="repeat" description="Type IIIA" evidence="3">
    <location>
        <begin position="1602"/>
        <end position="1722"/>
    </location>
</feature>
<feature type="repeat" description="Type IIIB" evidence="3">
    <location>
        <begin position="1723"/>
        <end position="1891"/>
    </location>
</feature>
<feature type="repeat" description="Type IIIA" evidence="3">
    <location>
        <begin position="1892"/>
        <end position="1994"/>
    </location>
</feature>
<feature type="repeat" description="Type IIIB" evidence="3">
    <location>
        <begin position="1995"/>
        <end position="2127"/>
    </location>
</feature>
<feature type="repeat" description="Type IIIA" evidence="3">
    <location>
        <begin position="2128"/>
        <end position="2185"/>
    </location>
</feature>
<feature type="region of interest" description="Cholinesterase-like (ChEL)" evidence="2">
    <location>
        <begin position="2188"/>
        <end position="2768"/>
    </location>
</feature>
<feature type="region of interest" description="Disordered" evidence="6">
    <location>
        <begin position="2731"/>
        <end position="2768"/>
    </location>
</feature>
<feature type="compositionally biased region" description="Acidic residues" evidence="6">
    <location>
        <begin position="2743"/>
        <end position="2755"/>
    </location>
</feature>
<feature type="modified residue" description="Iodotyrosine; alternate" evidence="3">
    <location>
        <position position="25"/>
    </location>
</feature>
<feature type="modified residue" description="Sulfotyrosine; alternate" evidence="1">
    <location>
        <position position="25"/>
    </location>
</feature>
<feature type="modified residue" description="Thyroxine; alternate" evidence="3">
    <location>
        <position position="25"/>
    </location>
</feature>
<feature type="modified residue" description="Triiodothyronine; alternate" evidence="3">
    <location>
        <position position="25"/>
    </location>
</feature>
<feature type="modified residue" description="Iodotyrosine" evidence="3">
    <location>
        <position position="109"/>
    </location>
</feature>
<feature type="modified residue" description="Diiodotyrosine; alternate" evidence="3">
    <location>
        <position position="150"/>
    </location>
</feature>
<feature type="modified residue" description="Iodotyrosine; alternate" evidence="3">
    <location>
        <position position="150"/>
    </location>
</feature>
<feature type="modified residue" description="Iodotyrosine" evidence="3">
    <location>
        <position position="235"/>
    </location>
</feature>
<feature type="modified residue" description="Iodotyrosine" evidence="3">
    <location>
        <position position="259"/>
    </location>
</feature>
<feature type="modified residue" description="Diiodotyrosine; alternate" evidence="3">
    <location>
        <position position="704"/>
    </location>
</feature>
<feature type="modified residue" description="Iodotyrosine; alternate" evidence="3">
    <location>
        <position position="704"/>
    </location>
</feature>
<feature type="modified residue" description="Thyroxine; alternate" evidence="3">
    <location>
        <position position="704"/>
    </location>
</feature>
<feature type="modified residue" description="Triiodothyronine; alternate" evidence="3">
    <location>
        <position position="704"/>
    </location>
</feature>
<feature type="modified residue" description="Iodotyrosine" evidence="3">
    <location>
        <position position="785"/>
    </location>
</feature>
<feature type="modified residue" description="Diiodotyrosine; alternate" evidence="3">
    <location>
        <position position="867"/>
    </location>
</feature>
<feature type="modified residue" description="Iodotyrosine; alternate" evidence="3">
    <location>
        <position position="867"/>
    </location>
</feature>
<feature type="modified residue" description="Diiodotyrosine" evidence="3">
    <location>
        <position position="884"/>
    </location>
</feature>
<feature type="modified residue" description="Diiodotyrosine; alternate" evidence="3">
    <location>
        <position position="993"/>
    </location>
</feature>
<feature type="modified residue" description="Iodotyrosine; alternate" evidence="3">
    <location>
        <position position="993"/>
    </location>
</feature>
<feature type="modified residue" description="Iodotyrosine" evidence="3">
    <location>
        <position position="1310"/>
    </location>
</feature>
<feature type="modified residue" description="Thyroxine" evidence="3">
    <location>
        <position position="1310"/>
    </location>
</feature>
<feature type="modified residue" description="Iodotyrosine" evidence="3">
    <location>
        <position position="2184"/>
    </location>
</feature>
<feature type="modified residue" description="Thyroxine" evidence="3">
    <location>
        <position position="2541"/>
    </location>
</feature>
<feature type="modified residue" description="Diiodotyrosine; alternate" evidence="3">
    <location>
        <position position="2574"/>
    </location>
</feature>
<feature type="modified residue" description="Iodotyrosine; alternate" evidence="3">
    <location>
        <position position="2574"/>
    </location>
</feature>
<feature type="modified residue" description="Thyroxine; alternate" evidence="3">
    <location>
        <position position="2574"/>
    </location>
</feature>
<feature type="modified residue" description="Triiodothyronine; alternate" evidence="3">
    <location>
        <position position="2574"/>
    </location>
</feature>
<feature type="modified residue" description="Iodotyrosine" evidence="3">
    <location>
        <position position="2588"/>
    </location>
</feature>
<feature type="modified residue" description="Iodotyrosine" evidence="3">
    <location>
        <position position="2618"/>
    </location>
</feature>
<feature type="modified residue" description="Diiodotyrosine" evidence="3">
    <location>
        <position position="2698"/>
    </location>
</feature>
<feature type="modified residue" description="Diiodotyrosine; alternate" evidence="3">
    <location>
        <position position="2766"/>
    </location>
</feature>
<feature type="modified residue" description="Iodotyrosine; alternate" evidence="3">
    <location>
        <position position="2766"/>
    </location>
</feature>
<feature type="modified residue" description="Thyroxine; alternate" evidence="3">
    <location>
        <position position="2766"/>
    </location>
</feature>
<feature type="modified residue" description="Triiodothyronine; alternate" evidence="3">
    <location>
        <position position="2766"/>
    </location>
</feature>
<feature type="glycosylation site" description="N-linked (GlcNAc...) asparagine" evidence="4">
    <location>
        <position position="111"/>
    </location>
</feature>
<feature type="glycosylation site" description="N-linked (GlcNAc...) asparagine" evidence="4">
    <location>
        <position position="199"/>
    </location>
</feature>
<feature type="glycosylation site" description="N-linked (GlcNAc...) asparagine" evidence="4">
    <location>
        <position position="484"/>
    </location>
</feature>
<feature type="glycosylation site" description="N-linked (GlcNAc...) asparagine" evidence="4">
    <location>
        <position position="496"/>
    </location>
</feature>
<feature type="glycosylation site" description="N-linked (GlcNAc...) asparagine" evidence="4">
    <location>
        <position position="545"/>
    </location>
</feature>
<feature type="glycosylation site" description="N-linked (GlcNAc...) asparagine" evidence="4">
    <location>
        <position position="748"/>
    </location>
</feature>
<feature type="glycosylation site" description="N-linked (GlcNAc...) asparagine" evidence="4">
    <location>
        <position position="817"/>
    </location>
</feature>
<feature type="glycosylation site" description="N-linked (GlcNAc...) asparagine" evidence="4">
    <location>
        <position position="948"/>
    </location>
</feature>
<feature type="glycosylation site" description="N-linked (GlcNAc...) asparagine" evidence="4">
    <location>
        <position position="1017"/>
    </location>
</feature>
<feature type="glycosylation site" description="N-linked (GlcNAc...) asparagine" evidence="4">
    <location>
        <position position="1141"/>
    </location>
</feature>
<feature type="glycosylation site" description="N-linked (GlcNAc...) asparagine" evidence="4">
    <location>
        <position position="1349"/>
    </location>
</feature>
<feature type="glycosylation site" description="N-linked (GlcNAc...) asparagine" evidence="4">
    <location>
        <position position="1365"/>
    </location>
</feature>
<feature type="glycosylation site" description="N-linked (GlcNAc...) asparagine" evidence="4">
    <location>
        <position position="1715"/>
    </location>
</feature>
<feature type="glycosylation site" description="N-linked (GlcNAc...) asparagine" evidence="4">
    <location>
        <position position="1773"/>
    </location>
</feature>
<feature type="glycosylation site" description="N-linked (GlcNAc...) asparagine" evidence="4">
    <location>
        <position position="1866"/>
    </location>
</feature>
<feature type="glycosylation site" description="N-linked (GlcNAc...) asparagine" evidence="4">
    <location>
        <position position="1937"/>
    </location>
</feature>
<feature type="glycosylation site" description="N-linked (GlcNAc...) asparagine" evidence="4">
    <location>
        <position position="2012"/>
    </location>
</feature>
<feature type="glycosylation site" description="N-linked (GlcNAc...) asparagine" evidence="4">
    <location>
        <position position="2122"/>
    </location>
</feature>
<feature type="glycosylation site" description="N-linked (GlcNAc...) asparagine" evidence="4">
    <location>
        <position position="2251"/>
    </location>
</feature>
<feature type="glycosylation site" description="N-linked (GlcNAc...) asparagine" evidence="4">
    <location>
        <position position="2296"/>
    </location>
</feature>
<feature type="glycosylation site" description="N-linked (GlcNAc...) asparagine" evidence="4">
    <location>
        <position position="2445"/>
    </location>
</feature>
<feature type="glycosylation site" description="N-linked (GlcNAc...) asparagine" evidence="4">
    <location>
        <position position="2583"/>
    </location>
</feature>
<feature type="disulfide bond" evidence="5">
    <location>
        <begin position="35"/>
        <end position="53"/>
    </location>
</feature>
<feature type="disulfide bond" evidence="5">
    <location>
        <begin position="64"/>
        <end position="71"/>
    </location>
</feature>
<feature type="disulfide bond" evidence="5">
    <location>
        <begin position="73"/>
        <end position="93"/>
    </location>
</feature>
<feature type="disulfide bond" evidence="5">
    <location>
        <begin position="97"/>
        <end position="121"/>
    </location>
</feature>
<feature type="disulfide bond" evidence="5">
    <location>
        <begin position="132"/>
        <end position="139"/>
    </location>
</feature>
<feature type="disulfide bond" evidence="5">
    <location>
        <begin position="141"/>
        <end position="161"/>
    </location>
</feature>
<feature type="disulfide bond" evidence="5">
    <location>
        <begin position="165"/>
        <end position="184"/>
    </location>
</feature>
<feature type="disulfide bond" evidence="5">
    <location>
        <begin position="195"/>
        <end position="236"/>
    </location>
</feature>
<feature type="disulfide bond" evidence="5">
    <location>
        <begin position="302"/>
        <end position="320"/>
    </location>
</feature>
<feature type="disulfide bond" evidence="5">
    <location>
        <begin position="331"/>
        <end position="337"/>
    </location>
</feature>
<feature type="disulfide bond" evidence="5">
    <location>
        <begin position="339"/>
        <end position="365"/>
    </location>
</feature>
<feature type="disulfide bond" evidence="3">
    <location>
        <begin position="408"/>
        <end position="608"/>
    </location>
</feature>
<feature type="disulfide bond" evidence="5">
    <location>
        <begin position="631"/>
        <end position="636"/>
    </location>
</feature>
<feature type="disulfide bond" evidence="5">
    <location>
        <begin position="638"/>
        <end position="658"/>
    </location>
</feature>
<feature type="disulfide bond" evidence="5">
    <location>
        <begin position="662"/>
        <end position="687"/>
    </location>
</feature>
<feature type="disulfide bond" evidence="5">
    <location>
        <begin position="698"/>
        <end position="703"/>
    </location>
</feature>
<feature type="disulfide bond" evidence="5">
    <location>
        <begin position="705"/>
        <end position="726"/>
    </location>
</feature>
<feature type="disulfide bond" evidence="5">
    <location>
        <begin position="730"/>
        <end position="763"/>
    </location>
</feature>
<feature type="disulfide bond" evidence="5">
    <location>
        <begin position="774"/>
        <end position="899"/>
    </location>
</feature>
<feature type="disulfide bond" evidence="5">
    <location>
        <begin position="901"/>
        <end position="922"/>
    </location>
</feature>
<feature type="disulfide bond" evidence="3">
    <location>
        <begin position="926"/>
        <end position="1032"/>
    </location>
</feature>
<feature type="disulfide bond" evidence="5">
    <location>
        <begin position="1043"/>
        <end position="1050"/>
    </location>
</feature>
<feature type="disulfide bond" evidence="5">
    <location>
        <begin position="1052"/>
        <end position="1074"/>
    </location>
</feature>
<feature type="disulfide bond" evidence="5">
    <location>
        <begin position="1078"/>
        <end position="1109"/>
    </location>
</feature>
<feature type="disulfide bond" evidence="5">
    <location>
        <begin position="1127"/>
        <end position="1146"/>
    </location>
</feature>
<feature type="disulfide bond" evidence="5">
    <location>
        <begin position="1150"/>
        <end position="1170"/>
    </location>
</feature>
<feature type="disulfide bond" evidence="5">
    <location>
        <begin position="1182"/>
        <end position="1189"/>
    </location>
</feature>
<feature type="disulfide bond" evidence="5">
    <location>
        <begin position="1191"/>
        <end position="1211"/>
    </location>
</feature>
<feature type="disulfide bond" evidence="3">
    <location>
        <begin position="1216"/>
        <end position="1265"/>
    </location>
</feature>
<feature type="disulfide bond" evidence="3">
    <location>
        <begin position="1232"/>
        <end position="1246"/>
    </location>
</feature>
<feature type="disulfide bond" evidence="3">
    <location>
        <begin position="1306"/>
        <end position="1356"/>
    </location>
</feature>
<feature type="disulfide bond" evidence="3">
    <location>
        <begin position="1331"/>
        <end position="1347"/>
    </location>
</feature>
<feature type="disulfide bond" evidence="3">
    <location>
        <begin position="1441"/>
        <end position="1458"/>
    </location>
</feature>
<feature type="disulfide bond" evidence="3">
    <location>
        <begin position="1461"/>
        <end position="1472"/>
    </location>
</feature>
<feature type="disulfide bond" evidence="3">
    <location>
        <begin position="1475"/>
        <end position="1489"/>
    </location>
</feature>
<feature type="disulfide bond" evidence="3">
    <location>
        <begin position="1492"/>
        <end position="1509"/>
    </location>
</feature>
<feature type="disulfide bond" evidence="5">
    <location>
        <begin position="1513"/>
        <end position="1522"/>
    </location>
</feature>
<feature type="disulfide bond" evidence="5">
    <location>
        <begin position="1542"/>
        <end position="1564"/>
    </location>
</feature>
<feature type="disulfide bond" evidence="3">
    <location>
        <begin position="1602"/>
        <end position="1626"/>
    </location>
</feature>
<feature type="disulfide bond" evidence="3">
    <location>
        <begin position="1606"/>
        <end position="1612"/>
    </location>
</feature>
<feature type="disulfide bond" evidence="3">
    <location>
        <begin position="1638"/>
        <end position="1661"/>
    </location>
</feature>
<feature type="disulfide bond" evidence="3">
    <location>
        <begin position="1723"/>
        <end position="1748"/>
    </location>
</feature>
<feature type="disulfide bond" evidence="3">
    <location>
        <begin position="1727"/>
        <end position="1733"/>
    </location>
</feature>
<feature type="disulfide bond" evidence="3">
    <location>
        <begin position="1732"/>
        <end position="1834"/>
    </location>
</feature>
<feature type="disulfide bond" evidence="3">
    <location>
        <begin position="1759"/>
        <end position="1776"/>
    </location>
</feature>
<feature type="disulfide bond" evidence="3">
    <location>
        <begin position="1892"/>
        <end position="1918"/>
    </location>
</feature>
<feature type="disulfide bond" evidence="3">
    <location>
        <begin position="1896"/>
        <end position="1903"/>
    </location>
</feature>
<feature type="disulfide bond" evidence="3">
    <location>
        <begin position="1927"/>
        <end position="1938"/>
    </location>
</feature>
<feature type="disulfide bond" evidence="3">
    <location>
        <begin position="1995"/>
        <end position="2023"/>
    </location>
</feature>
<feature type="disulfide bond" evidence="3">
    <location>
        <begin position="1999"/>
        <end position="2005"/>
    </location>
</feature>
<feature type="disulfide bond" evidence="3">
    <location>
        <begin position="2004"/>
        <end position="2075"/>
    </location>
</feature>
<feature type="disulfide bond" evidence="3">
    <location>
        <begin position="2034"/>
        <end position="2047"/>
    </location>
</feature>
<feature type="disulfide bond" evidence="3">
    <location>
        <begin position="2130"/>
        <end position="2154"/>
    </location>
</feature>
<feature type="disulfide bond" evidence="3">
    <location>
        <begin position="2134"/>
        <end position="2140"/>
    </location>
</feature>
<feature type="disulfide bond" evidence="3">
    <location>
        <begin position="2163"/>
        <end position="2172"/>
    </location>
</feature>
<feature type="disulfide bond" evidence="5">
    <location>
        <begin position="2265"/>
        <end position="2282"/>
    </location>
</feature>
<feature type="disulfide bond" evidence="3">
    <location>
        <begin position="2443"/>
        <end position="2454"/>
    </location>
</feature>
<feature type="disulfide bond" evidence="3">
    <location>
        <begin position="2592"/>
        <end position="2716"/>
    </location>
</feature>
<feature type="sequence variant" description="In hypothyroidism; suppress secretion of Tg." evidence="7">
    <original>G</original>
    <variation>R</variation>
    <location>
        <position position="2320"/>
    </location>
</feature>
<feature type="sequence conflict" description="In Ref. 4; AAA50379." evidence="8" ref="4">
    <original>L</original>
    <variation>V</variation>
    <location>
        <position position="44"/>
    </location>
</feature>
<feature type="sequence conflict" description="In Ref. 2; AAF34909." evidence="8" ref="2">
    <original>A</original>
    <variation>V</variation>
    <location>
        <position position="678"/>
    </location>
</feature>
<feature type="sequence conflict" description="In Ref. 2; AAF34909." evidence="8" ref="2">
    <original>C</original>
    <variation>F</variation>
    <location>
        <position position="1492"/>
    </location>
</feature>
<feature type="sequence conflict" description="In Ref. 2; AAF34909." evidence="8" ref="2">
    <original>CC</original>
    <variation>KS</variation>
    <location>
        <begin position="1732"/>
        <end position="1733"/>
    </location>
</feature>
<feature type="sequence conflict" description="In Ref. 5; CAA26183." evidence="8" ref="5">
    <original>L</original>
    <variation>F</variation>
    <location>
        <position position="1914"/>
    </location>
</feature>
<feature type="sequence conflict" description="In Ref. 5; CAA26183." evidence="8" ref="5">
    <original>R</original>
    <variation>A</variation>
    <location>
        <position position="2043"/>
    </location>
</feature>
<feature type="sequence conflict" description="In Ref. 5; CAA26183." evidence="8" ref="5">
    <original>Q</original>
    <variation>K</variation>
    <location>
        <position position="2081"/>
    </location>
</feature>
<feature type="sequence conflict" description="In Ref. 5; CAA26183." evidence="8" ref="5">
    <original>A</original>
    <variation>V</variation>
    <location>
        <position position="2126"/>
    </location>
</feature>
<feature type="sequence conflict" description="In Ref. 5; CAA26183." evidence="8" ref="5">
    <original>R</original>
    <variation>K</variation>
    <location>
        <position position="2153"/>
    </location>
</feature>
<feature type="sequence conflict" description="In Ref. 5; CAA26183." evidence="8" ref="5">
    <original>S</original>
    <variation>N</variation>
    <location>
        <position position="2169"/>
    </location>
</feature>
<feature type="sequence conflict" description="In Ref. 5; CAA26183." evidence="8" ref="5">
    <original>M</original>
    <variation>I</variation>
    <location>
        <position position="2611"/>
    </location>
</feature>
<feature type="sequence conflict" description="In Ref. 5; CAA26183." evidence="8" ref="5">
    <original>Q</original>
    <variation>H</variation>
    <location>
        <position position="2658"/>
    </location>
</feature>
<proteinExistence type="evidence at protein level"/>
<dbReference type="EMBL" id="AB035201">
    <property type="protein sequence ID" value="BAA96132.1"/>
    <property type="molecule type" value="mRNA"/>
</dbReference>
<dbReference type="EMBL" id="AF221622">
    <property type="protein sequence ID" value="AAF34909.1"/>
    <property type="molecule type" value="mRNA"/>
</dbReference>
<dbReference type="EMBL" id="M35965">
    <property type="protein sequence ID" value="AAA42089.1"/>
    <property type="status" value="ALT_TERM"/>
    <property type="molecule type" value="mRNA"/>
</dbReference>
<dbReference type="EMBL" id="M12559">
    <property type="protein sequence ID" value="AAA50379.1"/>
    <property type="molecule type" value="Genomic_DNA"/>
</dbReference>
<dbReference type="EMBL" id="M12558">
    <property type="protein sequence ID" value="AAA50379.1"/>
    <property type="status" value="JOINED"/>
    <property type="molecule type" value="Genomic_DNA"/>
</dbReference>
<dbReference type="EMBL" id="X02318">
    <property type="protein sequence ID" value="CAA26183.1"/>
    <property type="molecule type" value="mRNA"/>
</dbReference>
<dbReference type="PIR" id="A22016">
    <property type="entry name" value="UIRT"/>
</dbReference>
<dbReference type="SMR" id="P06882"/>
<dbReference type="CORUM" id="P06882"/>
<dbReference type="FunCoup" id="P06882">
    <property type="interactions" value="78"/>
</dbReference>
<dbReference type="IntAct" id="P06882">
    <property type="interactions" value="4"/>
</dbReference>
<dbReference type="STRING" id="10116.ENSRNOP00000009241"/>
<dbReference type="ESTHER" id="ratno-thyro">
    <property type="family name" value="Thyroglobulin"/>
</dbReference>
<dbReference type="MEROPS" id="I31.950"/>
<dbReference type="MEROPS" id="S09.978"/>
<dbReference type="GlyCosmos" id="P06882">
    <property type="glycosylation" value="22 sites, No reported glycans"/>
</dbReference>
<dbReference type="GlyGen" id="P06882">
    <property type="glycosylation" value="24 sites"/>
</dbReference>
<dbReference type="PhosphoSitePlus" id="P06882"/>
<dbReference type="PaxDb" id="10116-ENSRNOP00000009241"/>
<dbReference type="UCSC" id="RGD:3848">
    <property type="organism name" value="rat"/>
</dbReference>
<dbReference type="AGR" id="RGD:3848"/>
<dbReference type="RGD" id="3848">
    <property type="gene designation" value="Tg"/>
</dbReference>
<dbReference type="eggNOG" id="KOG1214">
    <property type="taxonomic scope" value="Eukaryota"/>
</dbReference>
<dbReference type="InParanoid" id="P06882"/>
<dbReference type="PhylomeDB" id="P06882"/>
<dbReference type="PRO" id="PR:P06882"/>
<dbReference type="Proteomes" id="UP000002494">
    <property type="component" value="Unplaced"/>
</dbReference>
<dbReference type="GO" id="GO:0005615">
    <property type="term" value="C:extracellular space"/>
    <property type="evidence" value="ECO:0000314"/>
    <property type="project" value="RGD"/>
</dbReference>
<dbReference type="GO" id="GO:0048471">
    <property type="term" value="C:perinuclear region of cytoplasm"/>
    <property type="evidence" value="ECO:0000314"/>
    <property type="project" value="RGD"/>
</dbReference>
<dbReference type="GO" id="GO:0032991">
    <property type="term" value="C:protein-containing complex"/>
    <property type="evidence" value="ECO:0000314"/>
    <property type="project" value="RGD"/>
</dbReference>
<dbReference type="GO" id="GO:0043168">
    <property type="term" value="F:anion binding"/>
    <property type="evidence" value="ECO:0000314"/>
    <property type="project" value="RGD"/>
</dbReference>
<dbReference type="GO" id="GO:0005179">
    <property type="term" value="F:hormone activity"/>
    <property type="evidence" value="ECO:0007669"/>
    <property type="project" value="UniProtKB-KW"/>
</dbReference>
<dbReference type="GO" id="GO:0042802">
    <property type="term" value="F:identical protein binding"/>
    <property type="evidence" value="ECO:0000353"/>
    <property type="project" value="RGD"/>
</dbReference>
<dbReference type="GO" id="GO:0044877">
    <property type="term" value="F:protein-containing complex binding"/>
    <property type="evidence" value="ECO:0000353"/>
    <property type="project" value="RGD"/>
</dbReference>
<dbReference type="GO" id="GO:0051087">
    <property type="term" value="F:protein-folding chaperone binding"/>
    <property type="evidence" value="ECO:0000353"/>
    <property type="project" value="RGD"/>
</dbReference>
<dbReference type="GO" id="GO:0005102">
    <property type="term" value="F:signaling receptor binding"/>
    <property type="evidence" value="ECO:0000314"/>
    <property type="project" value="RGD"/>
</dbReference>
<dbReference type="GO" id="GO:0071412">
    <property type="term" value="P:cellular response to genistein"/>
    <property type="evidence" value="ECO:0000270"/>
    <property type="project" value="RGD"/>
</dbReference>
<dbReference type="GO" id="GO:0042446">
    <property type="term" value="P:hormone biosynthetic process"/>
    <property type="evidence" value="ECO:0007669"/>
    <property type="project" value="UniProtKB-KW"/>
</dbReference>
<dbReference type="GO" id="GO:0015705">
    <property type="term" value="P:iodide transport"/>
    <property type="evidence" value="ECO:0000266"/>
    <property type="project" value="RGD"/>
</dbReference>
<dbReference type="GO" id="GO:0031641">
    <property type="term" value="P:regulation of myelination"/>
    <property type="evidence" value="ECO:0000266"/>
    <property type="project" value="RGD"/>
</dbReference>
<dbReference type="GO" id="GO:0032496">
    <property type="term" value="P:response to lipopolysaccharide"/>
    <property type="evidence" value="ECO:0000270"/>
    <property type="project" value="RGD"/>
</dbReference>
<dbReference type="GO" id="GO:0009268">
    <property type="term" value="P:response to pH"/>
    <property type="evidence" value="ECO:0000314"/>
    <property type="project" value="RGD"/>
</dbReference>
<dbReference type="GO" id="GO:0030878">
    <property type="term" value="P:thyroid gland development"/>
    <property type="evidence" value="ECO:0000266"/>
    <property type="project" value="RGD"/>
</dbReference>
<dbReference type="GO" id="GO:0006590">
    <property type="term" value="P:thyroid hormone generation"/>
    <property type="evidence" value="ECO:0000314"/>
    <property type="project" value="RGD"/>
</dbReference>
<dbReference type="GO" id="GO:0042403">
    <property type="term" value="P:thyroid hormone metabolic process"/>
    <property type="evidence" value="ECO:0000266"/>
    <property type="project" value="RGD"/>
</dbReference>
<dbReference type="GO" id="GO:0045056">
    <property type="term" value="P:transcytosis"/>
    <property type="evidence" value="ECO:0000314"/>
    <property type="project" value="RGD"/>
</dbReference>
<dbReference type="CDD" id="cd00191">
    <property type="entry name" value="TY"/>
    <property type="match status" value="8"/>
</dbReference>
<dbReference type="FunFam" id="4.10.800.10:FF:000004">
    <property type="entry name" value="SPARC-related modular calcium-binding protein 1"/>
    <property type="match status" value="1"/>
</dbReference>
<dbReference type="FunFam" id="2.10.50.10:FF:000047">
    <property type="entry name" value="Thyroglobulin"/>
    <property type="match status" value="1"/>
</dbReference>
<dbReference type="FunFam" id="3.40.50.1820:FF:000127">
    <property type="entry name" value="Thyroglobulin"/>
    <property type="match status" value="1"/>
</dbReference>
<dbReference type="FunFam" id="4.10.800.10:FF:000011">
    <property type="entry name" value="Thyroglobulin"/>
    <property type="match status" value="2"/>
</dbReference>
<dbReference type="FunFam" id="4.10.800.10:FF:000012">
    <property type="entry name" value="Thyroglobulin"/>
    <property type="match status" value="1"/>
</dbReference>
<dbReference type="FunFam" id="4.10.800.10:FF:000013">
    <property type="entry name" value="Thyroglobulin"/>
    <property type="match status" value="1"/>
</dbReference>
<dbReference type="FunFam" id="4.10.800.10:FF:000016">
    <property type="entry name" value="Thyroglobulin"/>
    <property type="match status" value="1"/>
</dbReference>
<dbReference type="Gene3D" id="3.40.50.1820">
    <property type="entry name" value="alpha/beta hydrolase"/>
    <property type="match status" value="1"/>
</dbReference>
<dbReference type="Gene3D" id="4.10.800.10">
    <property type="entry name" value="Thyroglobulin type-1"/>
    <property type="match status" value="10"/>
</dbReference>
<dbReference type="Gene3D" id="2.10.50.10">
    <property type="entry name" value="Tumor Necrosis Factor Receptor, subunit A, domain 2"/>
    <property type="match status" value="1"/>
</dbReference>
<dbReference type="InterPro" id="IPR029058">
    <property type="entry name" value="AB_hydrolase_fold"/>
</dbReference>
<dbReference type="InterPro" id="IPR002018">
    <property type="entry name" value="CarbesteraseB"/>
</dbReference>
<dbReference type="InterPro" id="IPR019819">
    <property type="entry name" value="Carboxylesterase_B_CS"/>
</dbReference>
<dbReference type="InterPro" id="IPR052001">
    <property type="entry name" value="MHC-II_Gamma/Thyroglobulin"/>
</dbReference>
<dbReference type="InterPro" id="IPR016324">
    <property type="entry name" value="Thyroglobulin"/>
</dbReference>
<dbReference type="InterPro" id="IPR000716">
    <property type="entry name" value="Thyroglobulin_1"/>
</dbReference>
<dbReference type="InterPro" id="IPR036857">
    <property type="entry name" value="Thyroglobulin_1_sf"/>
</dbReference>
<dbReference type="InterPro" id="IPR011641">
    <property type="entry name" value="Tyr-kin_ephrin_A/B_rcpt-like"/>
</dbReference>
<dbReference type="PANTHER" id="PTHR14093:SF21">
    <property type="entry name" value="EXPRESSED PROTEIN"/>
    <property type="match status" value="1"/>
</dbReference>
<dbReference type="PANTHER" id="PTHR14093">
    <property type="entry name" value="HLA CLASS II GAMMA CHAIN"/>
    <property type="match status" value="1"/>
</dbReference>
<dbReference type="Pfam" id="PF00135">
    <property type="entry name" value="COesterase"/>
    <property type="match status" value="1"/>
</dbReference>
<dbReference type="Pfam" id="PF07699">
    <property type="entry name" value="Ephrin_rec_like"/>
    <property type="match status" value="1"/>
</dbReference>
<dbReference type="Pfam" id="PF00086">
    <property type="entry name" value="Thyroglobulin_1"/>
    <property type="match status" value="10"/>
</dbReference>
<dbReference type="PIRSF" id="PIRSF001831">
    <property type="entry name" value="Thyroglobulin"/>
    <property type="match status" value="1"/>
</dbReference>
<dbReference type="SMART" id="SM01411">
    <property type="entry name" value="Ephrin_rec_like"/>
    <property type="match status" value="1"/>
</dbReference>
<dbReference type="SMART" id="SM00211">
    <property type="entry name" value="TY"/>
    <property type="match status" value="10"/>
</dbReference>
<dbReference type="SUPFAM" id="SSF53474">
    <property type="entry name" value="alpha/beta-Hydrolases"/>
    <property type="match status" value="1"/>
</dbReference>
<dbReference type="SUPFAM" id="SSF57610">
    <property type="entry name" value="Thyroglobulin type-1 domain"/>
    <property type="match status" value="11"/>
</dbReference>
<dbReference type="PROSITE" id="PS00941">
    <property type="entry name" value="CARBOXYLESTERASE_B_2"/>
    <property type="match status" value="1"/>
</dbReference>
<dbReference type="PROSITE" id="PS00484">
    <property type="entry name" value="THYROGLOBULIN_1_1"/>
    <property type="match status" value="9"/>
</dbReference>
<dbReference type="PROSITE" id="PS51162">
    <property type="entry name" value="THYROGLOBULIN_1_2"/>
    <property type="match status" value="11"/>
</dbReference>
<protein>
    <recommendedName>
        <fullName>Thyroglobulin</fullName>
        <shortName>Tg</shortName>
    </recommendedName>
</protein>
<reference key="1">
    <citation type="journal article" date="2000" name="Endocrinology">
        <title>A novel missense mutation (G2320R) in thyroglobulin causes hypothyroidism in rdw rats.</title>
        <authorList>
            <person name="Hishinuma A."/>
            <person name="Furudate S."/>
            <person name="Oh-Ishi M."/>
            <person name="Nagakubo N."/>
            <person name="Namatame T."/>
            <person name="Ieiri T."/>
        </authorList>
    </citation>
    <scope>NUCLEOTIDE SEQUENCE [MRNA]</scope>
    <scope>TISSUE SPECIFICITY</scope>
    <scope>DISEASE</scope>
    <scope>VARIANT HYPOTHYROIDISM ARG-2320</scope>
    <source>
        <strain>Wistar Imamichi</strain>
    </source>
</reference>
<reference key="2">
    <citation type="submission" date="2000-01" db="EMBL/GenBank/DDBJ databases">
        <title>A missense mutation in the thyroglobulin gene causes hypothyroidism and dwarfism not associated with goiter in the WIC-rdw rat.</title>
        <authorList>
            <person name="Ding M."/>
            <person name="Jung C.-C."/>
            <person name="Cheng J.-M."/>
            <person name="Miyamoto T."/>
            <person name="Furudate S.I."/>
            <person name="Agui T."/>
        </authorList>
    </citation>
    <scope>NUCLEOTIDE SEQUENCE [MRNA]</scope>
    <source>
        <strain>Fischer 344</strain>
    </source>
</reference>
<reference key="3">
    <citation type="journal article" date="1990" name="Mol. Endocrinol.">
        <title>A second thyroglobulin messenger RNA species (rTg-2) in rat thyrocytes.</title>
        <authorList>
            <person name="Graves P.N."/>
            <person name="Davies T.F."/>
        </authorList>
    </citation>
    <scope>NUCLEOTIDE SEQUENCE [MRNA] OF 1-213</scope>
    <source>
        <strain>Fischer</strain>
        <tissue>Thymocyte</tissue>
    </source>
</reference>
<reference key="4">
    <citation type="journal article" date="1986" name="Proc. Natl. Acad. Sci. U.S.A.">
        <title>The complete structure of the rat thyroglobulin gene.</title>
        <authorList>
            <person name="Musti A.M."/>
            <person name="Avvedimento V.E."/>
            <person name="Polistina C."/>
            <person name="Ursini V.M."/>
            <person name="Obici S."/>
            <person name="Nitsch L."/>
            <person name="Cocozza S."/>
            <person name="di Lauro R."/>
        </authorList>
    </citation>
    <scope>NUCLEOTIDE SEQUENCE [GENOMIC DNA] OF 1-59</scope>
</reference>
<reference key="5">
    <citation type="journal article" date="1985" name="Eur. J. Biochem.">
        <title>The sequence of 967 amino acids at the carboxyl-end of rat thyroglobulin. Location and surroundings of two thyroxine-forming sites.</title>
        <authorList>
            <person name="di Lauro R."/>
            <person name="Obici S."/>
            <person name="Condliffe D."/>
            <person name="Ursini V.M."/>
            <person name="Musti A.M."/>
            <person name="Moscatelli C."/>
            <person name="Avvedimento V.E."/>
        </authorList>
    </citation>
    <scope>NUCLEOTIDE SEQUENCE [MRNA] OF 1802-2768</scope>
</reference>
<gene>
    <name type="primary">Tg</name>
</gene>
<sequence length="2768" mass="304645">MMTLVLWVSTLLSSVCLVAANIFEYQVDAQPLRPCELQREKAFLKQDEYVPQCSEDGSFQTVQCQNDGQSCWCVDSDGTEVPGSRQLGRPTACLSFCQLHKQRILLSSYINSTDALYLPQCQDSGNYAPVQCDLQQVQCWCVDTEGMEVYGTRQQGRPTRCPRSCEIRSRRLLHGVGDKSPPQCDADGEFMPVQCKFVNTTDMMIFDLIHNYNRFPDAFVTFSAFRNRFPEVSGYCYCADSQGRELAETGLELLLDEIYDTIFAGLDQASTFTQSTMYRILQRRFLAIQLVISGRFRCPTKCEVEQFTATSFGHPYIPSCHRDGHYQTVQCQMERMCWCVDAQGIEIPGTRQQGQPLFCAKDQSCASERQQALSRLYFETPGYFSPQDLLSSEDRLVPVSGARLDISCPPRIKELFVDSGLLRSIAVERYQQLSESRSLLREAIRAIFPSRELAGLALQFTTNPKRLQQNLFGGTFLVNAAQLNLSGALGTRSTFNFSQFFQQFGLPGFLVRDRATDLAKLLPVSLDSSPTPVPLRVPEKRVAMNKSVVGTFGFKVNLQENQDALKFLVSLMELPEFLVFLQRAVSVPEDRARDLGDVMEMVFSAQACKQTSGRFFVPSCTAEGSYEDIQCYAGECWCVNSQGKEVEGSRVSGGHPRCPTKCEKQRAQMQNLAGAQPAGSSFFVPTCTSEGYFLPVQCFNSECYCVDAEGQVIPGTQSTIGEPKLCPSVCQLQAEQAFLGVVGVLLSNSSMVPPISSVYIPQCSTSGQWMPVQCDGPHEQVFEWYERWNTQNSDGQELTTATLLMKLMSYREVASTNFSLFLQSLYDAGQQSIFPVLAQYPSLQDVPQVVLEGATIQPGENIFLDPYIFWQILNGQLSQYPGPYSDFSMPLEHFNLRSCWCVDEAGQELDGTRTRAGEIPACPGPCEEVKFRVLKFIKETEEIVSASNASSFPLGESFLVAKGIQLTSEELGLPPLYPSREAFSEKFLRGSEYAIRLAAQSTLTFYQKLRASLGESNGTASLLWSGPYMPQCNTIGGWEPVQCHPGTGQCWCVDGWGELIPGSLMARSSQMPQCPTSCELSRANGLISAWKQAGHQRNPGPGDLFTPVCLQTGEYVRQQTSGTGAWCVDPSSGEGVPTNTNSSAQCPGLCDALKSRVLSRKVGLGYTPVCEALDGGFSPVQCDLAQGSCWCVLASGEEVPGTRVVGTQPACESPQCPLPFSGSDVTDGVVFCETASSSGVTTVQQCQLFCRQGLRNVFSPGPLICNLESQRWVTLPLPRACQRPQLWQTMQTQAHFQLLLPPGKMCSIDYSGLLQAFQVFILDELITRGFCQIQVKTFGTLVSRTVCDNSSIQVGCLTAERLGVNATWKLQLEDISVGSLPNLHSIERALMGQDLLGRFANLIQSGKFQLHLDSKTFSADTILYFLNGDRFVTSPMTQLGCLEGFYRVSTTSQDPLGCVKCPEGSFSQDGKCTPCPAGTYQGQAGSSACIPCPRGRTTTITGAFSKTHCVTDCQRDEAGLQCDQNGQYQANQKDMDSGEVFCVDSEGQRLQWLQTEAGLSESQCLMMRKFEKAPESKVIFDASSPVIVKSRVPSANSPLVQCLADCADDEACSFVTVSSMSSEVSCDLYSWTRDNFACVTSDQEEDAVDSLKETSFGSLRCQVKVRNSGKDSLAVYVKKGHEFTASGQKSFEPTGFQNVLSGLYSSVVFSALGTNLTDTHLFCLLACDQDSCCDGFIVTQVKEGPTICGLLSAPDILVCHINDWRDASDTQANGTCAGVTYDQGSRQMTMSLGGQEFLQGLTLLEGTQDSFISFQQVYLWKDSDIGSRPESMGCGRGMVPKSEAPEGADMATELFSPVDITQVIVNTSHSLPSQQYWLSTHLFSAEQANLWCLSRCAQEPVFCQLADIMESSSLYFTCSLYPEAQVCDNDVESNAKNCSQILPRQPTALFQRKVVLNDRVKNFYTRLPFQKLSGISIRDRIPMSEKLISNGFFECERLCDRDPCCTGFGFLNVSQMQGGEMTCLTLNSMGIQTCSEENGATWRILDCGSEDTEVHTYPFGWYQKPAVWSDAPSFCPSAALQSLTEEKVALDSWQTLALSSVIIDPSIKHFDVAHISISATRNFSLAQDFCLQECSRHQDCLVTTLQIQQGVVRCVFYPDIQSCEHSLRSKTCWLLLHEEAAYIYRKSGAPLHQSDGISTPSVHIDSFGQLQGGSQVVKVGTAWKQVYQFLGVPYAAPPLAENRFQAPEVLNWTGSWDATKLRSSCWQPGTRTPTPPQISEDCLYLNVFVPENLVSNASVLVFFHNTVEMEGSGGQLNIDGSILAAVGNLIVVTANYRLGVFGFLSSGSDEVAGNWGLLDQVAALTWVQTHIGAFGGDPQRVTLAADRGGADVASIHLLITRPTRLQLFRKALLMGGSALSPAAIISPDRAQQQAAALAKEVGCPNSSVQEVVSCFRQKPANILNEAQTKLLAVSGPFHYWGPVVDGQYLRELPSRRLKRPLPVKVDLLIGGSQDDGLINRAKAVKQFEESQGRTNSKTAFYQALQNSLGGEDSDARILAAAIWYYSLEHSTDDYASFSRALENATRDYFIICPIVNMASLWARRTRGNVFMYHVPESYGHGSLELLADVQYAFGLPFYSAYQGYFSTEEQSLSLKVMQYFSNFIRSGNPNYPHEFSQKAAEFATPWPDFVPGAGGESYKELSAQLPNRQGLKKADCSFWSKYIQTLKDADGAKDAQLTKSGEEDLEVGPGSEEDFSGSLEPVPKSYSK</sequence>
<name>THYG_RAT</name>
<organism>
    <name type="scientific">Rattus norvegicus</name>
    <name type="common">Rat</name>
    <dbReference type="NCBI Taxonomy" id="10116"/>
    <lineage>
        <taxon>Eukaryota</taxon>
        <taxon>Metazoa</taxon>
        <taxon>Chordata</taxon>
        <taxon>Craniata</taxon>
        <taxon>Vertebrata</taxon>
        <taxon>Euteleostomi</taxon>
        <taxon>Mammalia</taxon>
        <taxon>Eutheria</taxon>
        <taxon>Euarchontoglires</taxon>
        <taxon>Glires</taxon>
        <taxon>Rodentia</taxon>
        <taxon>Myomorpha</taxon>
        <taxon>Muroidea</taxon>
        <taxon>Muridae</taxon>
        <taxon>Murinae</taxon>
        <taxon>Rattus</taxon>
    </lineage>
</organism>
<evidence type="ECO:0000250" key="1">
    <source>
        <dbReference type="UniProtKB" id="F1RRV3"/>
    </source>
</evidence>
<evidence type="ECO:0000250" key="2">
    <source>
        <dbReference type="UniProtKB" id="O08710"/>
    </source>
</evidence>
<evidence type="ECO:0000250" key="3">
    <source>
        <dbReference type="UniProtKB" id="P01266"/>
    </source>
</evidence>
<evidence type="ECO:0000255" key="4"/>
<evidence type="ECO:0000255" key="5">
    <source>
        <dbReference type="PROSITE-ProRule" id="PRU00500"/>
    </source>
</evidence>
<evidence type="ECO:0000256" key="6">
    <source>
        <dbReference type="SAM" id="MobiDB-lite"/>
    </source>
</evidence>
<evidence type="ECO:0000269" key="7">
    <source>
    </source>
</evidence>
<evidence type="ECO:0000305" key="8"/>
<comment type="function">
    <text evidence="1 2 3">Acts as a substrate for the production of iodinated thyroid hormones thyroxine (T4) and triiodothyronine (T3) (By similarity). The synthesis of T3 and T4 involves iodination of selected tyrosine residues of TG/thyroglobulin followed by their oxidative coupling (By similarity). Following TG re-internalization and lysosomal-mediated proteolysis, T3 and T4 are released from the polypeptide backbone leading to their secretion into the bloodstream (By similarity). One dimer produces 7 thyroid hormone molecules (By similarity).</text>
</comment>
<comment type="subunit">
    <text evidence="2 3">Monomer (By similarity). Homodimer (via ChEL region); occurs in the endoplasmic reticulum and is required for export to the Golgi apparatus (By similarity). Homooligomer; disulfide-linked; stored in this form in the thyroid follicle lumen (By similarity).</text>
</comment>
<comment type="interaction">
    <interactant intactId="EBI-1549657">
        <id>P06882</id>
    </interactant>
    <interactant intactId="EBI-916036">
        <id>P06761</id>
        <label>Hspa5</label>
    </interactant>
    <organismsDiffer>false</organismsDiffer>
    <experiments>6</experiments>
</comment>
<comment type="interaction">
    <interactant intactId="EBI-1549657">
        <id>P06882</id>
    </interactant>
    <interactant intactId="EBI-917435">
        <id>P38659</id>
        <label>Pdia4</label>
    </interactant>
    <organismsDiffer>false</organismsDiffer>
    <experiments>3</experiments>
</comment>
<comment type="interaction">
    <interactant intactId="EBI-1549657">
        <id>P06882</id>
    </interactant>
    <interactant intactId="EBI-1057058">
        <id>Q99523</id>
        <label>SORT1</label>
    </interactant>
    <organismsDiffer>true</organismsDiffer>
    <experiments>4</experiments>
</comment>
<comment type="subcellular location">
    <subcellularLocation>
        <location evidence="2">Secreted</location>
    </subcellularLocation>
    <text evidence="2">Secreted into the thyroid follicle lumen. Localizes to colloid globules, a structure formed in the thyroid follicle lumen consisting of cross-linked TG arranged in concentric layers.</text>
</comment>
<comment type="tissue specificity">
    <text evidence="7">Specifically expressed in the thyroid gland.</text>
</comment>
<comment type="domain">
    <text evidence="2">The cholinesterase-like (ChEL) region is required for dimerization and export from the endoplasmic reticulum.</text>
</comment>
<comment type="PTM">
    <text evidence="1 3">Iodinated on tyrosine residues by TPO (By similarity). There are 4 pairs of iodinated tyrosines used for coupling: acceptor Tyr-25 is coupled to donor Tyr-150 or Tyr-235, acceptor Tyr-2574 is coupled to donor Tyr-2541, acceptor Tyr-2766 in monomer 1 is coupled to donor Tyr-2766 in monomer 2 and acceptor Tyr-1310 in monomer 1 is coupled to donor Tyr-109 in monomer 2 (By similarity).</text>
</comment>
<comment type="PTM">
    <text evidence="3">Sulfated tyrosines are desulfated during iodination.</text>
</comment>
<comment type="PTM">
    <text evidence="2">Undergoes sequential proteolysis by cathepsins to release thyroxine (T4) and triiodothyronine (T3) hormones. In the thyroid follicle lumen, cross-linked TG (storage form) is solubilized by limited proteolysis mediated by cathepsins CTSB and/or CTSL. Partially cleaved TG is further processed by CTSK/cathepsin K and/or CTSL resulting in the release of thyroxine (T4). Following endocytosis, further processing occurs leading to the release of triiodothyronine (T3) and more T4 hormones.</text>
</comment>
<comment type="disease">
    <text evidence="7">Defects in Tg are a cause of a form of hypothyroidism in rdw rat.</text>
</comment>
<comment type="similarity">
    <text evidence="8">Belongs to the type-B carboxylesterase/lipase family.</text>
</comment>
<comment type="caution">
    <text evidence="8">The cholinesterase-like (ChEL) region lacks the Ser residue of the catalytic triad suggesting that it has no esterase activity.</text>
</comment>
<keyword id="KW-0225">Disease variant</keyword>
<keyword id="KW-1015">Disulfide bond</keyword>
<keyword id="KW-0325">Glycoprotein</keyword>
<keyword id="KW-0372">Hormone</keyword>
<keyword id="KW-0405">Iodination</keyword>
<keyword id="KW-1185">Reference proteome</keyword>
<keyword id="KW-0677">Repeat</keyword>
<keyword id="KW-0964">Secreted</keyword>
<keyword id="KW-0732">Signal</keyword>
<keyword id="KW-0765">Sulfation</keyword>
<keyword id="KW-0795">Thyroid hormone</keyword>
<keyword id="KW-0893">Thyroid hormones biosynthesis</keyword>
<accession>P06882</accession>
<accession>Q9JKY6</accession>
<accession>Q9JM94</accession>